<evidence type="ECO:0000255" key="1">
    <source>
        <dbReference type="HAMAP-Rule" id="MF_00121"/>
    </source>
</evidence>
<gene>
    <name evidence="1" type="primary">gatB</name>
    <name type="ordered locus">Wbm0704</name>
</gene>
<name>GATB_WOLTR</name>
<protein>
    <recommendedName>
        <fullName evidence="1">Aspartyl/glutamyl-tRNA(Asn/Gln) amidotransferase subunit B</fullName>
        <shortName evidence="1">Asp/Glu-ADT subunit B</shortName>
        <ecNumber evidence="1">6.3.5.-</ecNumber>
    </recommendedName>
</protein>
<dbReference type="EC" id="6.3.5.-" evidence="1"/>
<dbReference type="EMBL" id="AE017321">
    <property type="protein sequence ID" value="AAW71292.1"/>
    <property type="molecule type" value="Genomic_DNA"/>
</dbReference>
<dbReference type="RefSeq" id="WP_011256901.1">
    <property type="nucleotide sequence ID" value="NC_006833.1"/>
</dbReference>
<dbReference type="SMR" id="Q5GRT2"/>
<dbReference type="STRING" id="292805.Wbm0704"/>
<dbReference type="KEGG" id="wbm:Wbm0704"/>
<dbReference type="eggNOG" id="COG0064">
    <property type="taxonomic scope" value="Bacteria"/>
</dbReference>
<dbReference type="HOGENOM" id="CLU_019240_0_0_5"/>
<dbReference type="Proteomes" id="UP000000534">
    <property type="component" value="Chromosome"/>
</dbReference>
<dbReference type="GO" id="GO:0050566">
    <property type="term" value="F:asparaginyl-tRNA synthase (glutamine-hydrolyzing) activity"/>
    <property type="evidence" value="ECO:0007669"/>
    <property type="project" value="RHEA"/>
</dbReference>
<dbReference type="GO" id="GO:0005524">
    <property type="term" value="F:ATP binding"/>
    <property type="evidence" value="ECO:0007669"/>
    <property type="project" value="UniProtKB-KW"/>
</dbReference>
<dbReference type="GO" id="GO:0050567">
    <property type="term" value="F:glutaminyl-tRNA synthase (glutamine-hydrolyzing) activity"/>
    <property type="evidence" value="ECO:0007669"/>
    <property type="project" value="UniProtKB-UniRule"/>
</dbReference>
<dbReference type="GO" id="GO:0070681">
    <property type="term" value="P:glutaminyl-tRNAGln biosynthesis via transamidation"/>
    <property type="evidence" value="ECO:0007669"/>
    <property type="project" value="TreeGrafter"/>
</dbReference>
<dbReference type="GO" id="GO:0006412">
    <property type="term" value="P:translation"/>
    <property type="evidence" value="ECO:0007669"/>
    <property type="project" value="UniProtKB-UniRule"/>
</dbReference>
<dbReference type="FunFam" id="1.10.10.410:FF:000001">
    <property type="entry name" value="Aspartyl/glutamyl-tRNA(Asn/Gln) amidotransferase subunit B"/>
    <property type="match status" value="1"/>
</dbReference>
<dbReference type="Gene3D" id="1.10.10.410">
    <property type="match status" value="1"/>
</dbReference>
<dbReference type="Gene3D" id="1.10.150.380">
    <property type="entry name" value="GatB domain, N-terminal subdomain"/>
    <property type="match status" value="1"/>
</dbReference>
<dbReference type="HAMAP" id="MF_00121">
    <property type="entry name" value="GatB"/>
    <property type="match status" value="1"/>
</dbReference>
<dbReference type="InterPro" id="IPR017959">
    <property type="entry name" value="Asn/Gln-tRNA_amidoTrfase_suB/E"/>
</dbReference>
<dbReference type="InterPro" id="IPR006075">
    <property type="entry name" value="Asn/Gln-tRNA_Trfase_suB/E_cat"/>
</dbReference>
<dbReference type="InterPro" id="IPR018027">
    <property type="entry name" value="Asn/Gln_amidotransferase"/>
</dbReference>
<dbReference type="InterPro" id="IPR003789">
    <property type="entry name" value="Asn/Gln_tRNA_amidoTrase-B-like"/>
</dbReference>
<dbReference type="InterPro" id="IPR004413">
    <property type="entry name" value="GatB"/>
</dbReference>
<dbReference type="InterPro" id="IPR042114">
    <property type="entry name" value="GatB_C_1"/>
</dbReference>
<dbReference type="InterPro" id="IPR023168">
    <property type="entry name" value="GatB_Yqey_C_2"/>
</dbReference>
<dbReference type="InterPro" id="IPR017958">
    <property type="entry name" value="Gln-tRNA_amidoTrfase_suB_CS"/>
</dbReference>
<dbReference type="InterPro" id="IPR014746">
    <property type="entry name" value="Gln_synth/guanido_kin_cat_dom"/>
</dbReference>
<dbReference type="NCBIfam" id="TIGR00133">
    <property type="entry name" value="gatB"/>
    <property type="match status" value="1"/>
</dbReference>
<dbReference type="NCBIfam" id="NF004012">
    <property type="entry name" value="PRK05477.1-2"/>
    <property type="match status" value="1"/>
</dbReference>
<dbReference type="NCBIfam" id="NF004014">
    <property type="entry name" value="PRK05477.1-4"/>
    <property type="match status" value="1"/>
</dbReference>
<dbReference type="NCBIfam" id="NF004015">
    <property type="entry name" value="PRK05477.1-5"/>
    <property type="match status" value="1"/>
</dbReference>
<dbReference type="PANTHER" id="PTHR11659">
    <property type="entry name" value="GLUTAMYL-TRNA GLN AMIDOTRANSFERASE SUBUNIT B MITOCHONDRIAL AND PROKARYOTIC PET112-RELATED"/>
    <property type="match status" value="1"/>
</dbReference>
<dbReference type="PANTHER" id="PTHR11659:SF0">
    <property type="entry name" value="GLUTAMYL-TRNA(GLN) AMIDOTRANSFERASE SUBUNIT B, MITOCHONDRIAL"/>
    <property type="match status" value="1"/>
</dbReference>
<dbReference type="Pfam" id="PF02934">
    <property type="entry name" value="GatB_N"/>
    <property type="match status" value="1"/>
</dbReference>
<dbReference type="Pfam" id="PF02637">
    <property type="entry name" value="GatB_Yqey"/>
    <property type="match status" value="1"/>
</dbReference>
<dbReference type="SMART" id="SM00845">
    <property type="entry name" value="GatB_Yqey"/>
    <property type="match status" value="1"/>
</dbReference>
<dbReference type="SUPFAM" id="SSF89095">
    <property type="entry name" value="GatB/YqeY motif"/>
    <property type="match status" value="1"/>
</dbReference>
<dbReference type="SUPFAM" id="SSF55931">
    <property type="entry name" value="Glutamine synthetase/guanido kinase"/>
    <property type="match status" value="1"/>
</dbReference>
<dbReference type="PROSITE" id="PS01234">
    <property type="entry name" value="GATB"/>
    <property type="match status" value="1"/>
</dbReference>
<organism>
    <name type="scientific">Wolbachia sp. subsp. Brugia malayi (strain TRS)</name>
    <dbReference type="NCBI Taxonomy" id="292805"/>
    <lineage>
        <taxon>Bacteria</taxon>
        <taxon>Pseudomonadati</taxon>
        <taxon>Pseudomonadota</taxon>
        <taxon>Alphaproteobacteria</taxon>
        <taxon>Rickettsiales</taxon>
        <taxon>Anaplasmataceae</taxon>
        <taxon>Wolbachieae</taxon>
        <taxon>Wolbachia</taxon>
    </lineage>
</organism>
<keyword id="KW-0067">ATP-binding</keyword>
<keyword id="KW-0436">Ligase</keyword>
<keyword id="KW-0547">Nucleotide-binding</keyword>
<keyword id="KW-0648">Protein biosynthesis</keyword>
<keyword id="KW-1185">Reference proteome</keyword>
<reference key="1">
    <citation type="journal article" date="2005" name="PLoS Biol.">
        <title>The Wolbachia genome of Brugia malayi: endosymbiont evolution within a human pathogenic nematode.</title>
        <authorList>
            <person name="Foster J."/>
            <person name="Ganatra M."/>
            <person name="Kamal I."/>
            <person name="Ware J."/>
            <person name="Makarova K."/>
            <person name="Ivanova N."/>
            <person name="Bhattacharyya A."/>
            <person name="Kapatral V."/>
            <person name="Kumar S."/>
            <person name="Posfai J."/>
            <person name="Vincze T."/>
            <person name="Ingram J."/>
            <person name="Moran L."/>
            <person name="Lapidus A."/>
            <person name="Omelchenko M."/>
            <person name="Kyrpides N."/>
            <person name="Ghedin E."/>
            <person name="Wang S."/>
            <person name="Goltsman E."/>
            <person name="Joukov V."/>
            <person name="Ostrovskaya O."/>
            <person name="Tsukerman K."/>
            <person name="Mazur M."/>
            <person name="Comb D."/>
            <person name="Koonin E."/>
            <person name="Slatko B."/>
        </authorList>
    </citation>
    <scope>NUCLEOTIDE SEQUENCE [LARGE SCALE GENOMIC DNA]</scope>
    <source>
        <strain>TRS</strain>
    </source>
</reference>
<comment type="function">
    <text evidence="1">Allows the formation of correctly charged Asn-tRNA(Asn) or Gln-tRNA(Gln) through the transamidation of misacylated Asp-tRNA(Asn) or Glu-tRNA(Gln) in organisms which lack either or both of asparaginyl-tRNA or glutaminyl-tRNA synthetases. The reaction takes place in the presence of glutamine and ATP through an activated phospho-Asp-tRNA(Asn) or phospho-Glu-tRNA(Gln).</text>
</comment>
<comment type="catalytic activity">
    <reaction evidence="1">
        <text>L-glutamyl-tRNA(Gln) + L-glutamine + ATP + H2O = L-glutaminyl-tRNA(Gln) + L-glutamate + ADP + phosphate + H(+)</text>
        <dbReference type="Rhea" id="RHEA:17521"/>
        <dbReference type="Rhea" id="RHEA-COMP:9681"/>
        <dbReference type="Rhea" id="RHEA-COMP:9684"/>
        <dbReference type="ChEBI" id="CHEBI:15377"/>
        <dbReference type="ChEBI" id="CHEBI:15378"/>
        <dbReference type="ChEBI" id="CHEBI:29985"/>
        <dbReference type="ChEBI" id="CHEBI:30616"/>
        <dbReference type="ChEBI" id="CHEBI:43474"/>
        <dbReference type="ChEBI" id="CHEBI:58359"/>
        <dbReference type="ChEBI" id="CHEBI:78520"/>
        <dbReference type="ChEBI" id="CHEBI:78521"/>
        <dbReference type="ChEBI" id="CHEBI:456216"/>
    </reaction>
</comment>
<comment type="catalytic activity">
    <reaction evidence="1">
        <text>L-aspartyl-tRNA(Asn) + L-glutamine + ATP + H2O = L-asparaginyl-tRNA(Asn) + L-glutamate + ADP + phosphate + 2 H(+)</text>
        <dbReference type="Rhea" id="RHEA:14513"/>
        <dbReference type="Rhea" id="RHEA-COMP:9674"/>
        <dbReference type="Rhea" id="RHEA-COMP:9677"/>
        <dbReference type="ChEBI" id="CHEBI:15377"/>
        <dbReference type="ChEBI" id="CHEBI:15378"/>
        <dbReference type="ChEBI" id="CHEBI:29985"/>
        <dbReference type="ChEBI" id="CHEBI:30616"/>
        <dbReference type="ChEBI" id="CHEBI:43474"/>
        <dbReference type="ChEBI" id="CHEBI:58359"/>
        <dbReference type="ChEBI" id="CHEBI:78515"/>
        <dbReference type="ChEBI" id="CHEBI:78516"/>
        <dbReference type="ChEBI" id="CHEBI:456216"/>
    </reaction>
</comment>
<comment type="subunit">
    <text evidence="1">Heterotrimer of A, B and C subunits.</text>
</comment>
<comment type="similarity">
    <text evidence="1">Belongs to the GatB/GatE family. GatB subfamily.</text>
</comment>
<accession>Q5GRT2</accession>
<proteinExistence type="inferred from homology"/>
<feature type="chain" id="PRO_0000241298" description="Aspartyl/glutamyl-tRNA(Asn/Gln) amidotransferase subunit B">
    <location>
        <begin position="1"/>
        <end position="474"/>
    </location>
</feature>
<sequence length="474" mass="53457">MTKGDWEAVIGLEVHAQVSSKTKLFSSSSTEFGAEHNTQVSLVDAAMPGTLPILNYYSIEQAIRTGLALSAEINKSSYFDRKNYFYPDLPQGYQITQFFEPIVKNGRIFINNNKKEVRIARIHLEQDAGKSIHEESKTYVDLNRAGVALMEIVSEPDLRSSEEAAEFMKKLRQILRYIGSCDGDMEKGSLRCDANVSVRPKGSSTFGTRCEIKNLNSICYIMQAIDYEIQRQIEILESGEKISQDTLLFDVSLGKTKVMRNKEDASDYRYFPEPDLLPVEISQDKIDSIRSSLPELPDQKKLRYIRELSINKYDADVITSDKAIANYFEELIKKHDSKLAVTWLTVELFGRLNKAGIDIVSSPIKANALSELLDFIVDGTISARLGKQVFDIMFETGKPASLIIKEQDLKQITDKGQISEIIDKIINDNQDKVQEYQNGKTKLYGFFVGEVMKLTKGKASPDVVNFILSEKLSS</sequence>